<gene>
    <name evidence="1" type="primary">rplO</name>
    <name type="ordered locus">Shew_0177</name>
</gene>
<keyword id="KW-1185">Reference proteome</keyword>
<keyword id="KW-0687">Ribonucleoprotein</keyword>
<keyword id="KW-0689">Ribosomal protein</keyword>
<keyword id="KW-0694">RNA-binding</keyword>
<keyword id="KW-0699">rRNA-binding</keyword>
<organism>
    <name type="scientific">Shewanella loihica (strain ATCC BAA-1088 / PV-4)</name>
    <dbReference type="NCBI Taxonomy" id="323850"/>
    <lineage>
        <taxon>Bacteria</taxon>
        <taxon>Pseudomonadati</taxon>
        <taxon>Pseudomonadota</taxon>
        <taxon>Gammaproteobacteria</taxon>
        <taxon>Alteromonadales</taxon>
        <taxon>Shewanellaceae</taxon>
        <taxon>Shewanella</taxon>
    </lineage>
</organism>
<dbReference type="EMBL" id="CP000606">
    <property type="protein sequence ID" value="ABO22049.1"/>
    <property type="molecule type" value="Genomic_DNA"/>
</dbReference>
<dbReference type="RefSeq" id="WP_011863985.1">
    <property type="nucleotide sequence ID" value="NC_009092.1"/>
</dbReference>
<dbReference type="SMR" id="A3Q9A1"/>
<dbReference type="STRING" id="323850.Shew_0177"/>
<dbReference type="KEGG" id="slo:Shew_0177"/>
<dbReference type="eggNOG" id="COG0200">
    <property type="taxonomic scope" value="Bacteria"/>
</dbReference>
<dbReference type="HOGENOM" id="CLU_055188_4_2_6"/>
<dbReference type="OrthoDB" id="9810293at2"/>
<dbReference type="Proteomes" id="UP000001558">
    <property type="component" value="Chromosome"/>
</dbReference>
<dbReference type="GO" id="GO:0022625">
    <property type="term" value="C:cytosolic large ribosomal subunit"/>
    <property type="evidence" value="ECO:0007669"/>
    <property type="project" value="TreeGrafter"/>
</dbReference>
<dbReference type="GO" id="GO:0019843">
    <property type="term" value="F:rRNA binding"/>
    <property type="evidence" value="ECO:0007669"/>
    <property type="project" value="UniProtKB-UniRule"/>
</dbReference>
<dbReference type="GO" id="GO:0003735">
    <property type="term" value="F:structural constituent of ribosome"/>
    <property type="evidence" value="ECO:0007669"/>
    <property type="project" value="InterPro"/>
</dbReference>
<dbReference type="GO" id="GO:0006412">
    <property type="term" value="P:translation"/>
    <property type="evidence" value="ECO:0007669"/>
    <property type="project" value="UniProtKB-UniRule"/>
</dbReference>
<dbReference type="FunFam" id="3.100.10.10:FF:000003">
    <property type="entry name" value="50S ribosomal protein L15"/>
    <property type="match status" value="1"/>
</dbReference>
<dbReference type="Gene3D" id="3.100.10.10">
    <property type="match status" value="1"/>
</dbReference>
<dbReference type="HAMAP" id="MF_01341">
    <property type="entry name" value="Ribosomal_uL15"/>
    <property type="match status" value="1"/>
</dbReference>
<dbReference type="InterPro" id="IPR030878">
    <property type="entry name" value="Ribosomal_uL15"/>
</dbReference>
<dbReference type="InterPro" id="IPR021131">
    <property type="entry name" value="Ribosomal_uL15/eL18"/>
</dbReference>
<dbReference type="InterPro" id="IPR036227">
    <property type="entry name" value="Ribosomal_uL15/eL18_sf"/>
</dbReference>
<dbReference type="InterPro" id="IPR005749">
    <property type="entry name" value="Ribosomal_uL15_bac-type"/>
</dbReference>
<dbReference type="InterPro" id="IPR001196">
    <property type="entry name" value="Ribosomal_uL15_CS"/>
</dbReference>
<dbReference type="NCBIfam" id="TIGR01071">
    <property type="entry name" value="rplO_bact"/>
    <property type="match status" value="1"/>
</dbReference>
<dbReference type="PANTHER" id="PTHR12934">
    <property type="entry name" value="50S RIBOSOMAL PROTEIN L15"/>
    <property type="match status" value="1"/>
</dbReference>
<dbReference type="PANTHER" id="PTHR12934:SF11">
    <property type="entry name" value="LARGE RIBOSOMAL SUBUNIT PROTEIN UL15M"/>
    <property type="match status" value="1"/>
</dbReference>
<dbReference type="Pfam" id="PF00828">
    <property type="entry name" value="Ribosomal_L27A"/>
    <property type="match status" value="1"/>
</dbReference>
<dbReference type="SUPFAM" id="SSF52080">
    <property type="entry name" value="Ribosomal proteins L15p and L18e"/>
    <property type="match status" value="1"/>
</dbReference>
<dbReference type="PROSITE" id="PS00475">
    <property type="entry name" value="RIBOSOMAL_L15"/>
    <property type="match status" value="1"/>
</dbReference>
<reference key="1">
    <citation type="submission" date="2007-03" db="EMBL/GenBank/DDBJ databases">
        <title>Complete sequence of Shewanella loihica PV-4.</title>
        <authorList>
            <consortium name="US DOE Joint Genome Institute"/>
            <person name="Copeland A."/>
            <person name="Lucas S."/>
            <person name="Lapidus A."/>
            <person name="Barry K."/>
            <person name="Detter J.C."/>
            <person name="Glavina del Rio T."/>
            <person name="Hammon N."/>
            <person name="Israni S."/>
            <person name="Dalin E."/>
            <person name="Tice H."/>
            <person name="Pitluck S."/>
            <person name="Chain P."/>
            <person name="Malfatti S."/>
            <person name="Shin M."/>
            <person name="Vergez L."/>
            <person name="Schmutz J."/>
            <person name="Larimer F."/>
            <person name="Land M."/>
            <person name="Hauser L."/>
            <person name="Kyrpides N."/>
            <person name="Mikhailova N."/>
            <person name="Romine M.F."/>
            <person name="Serres G."/>
            <person name="Fredrickson J."/>
            <person name="Tiedje J."/>
            <person name="Richardson P."/>
        </authorList>
    </citation>
    <scope>NUCLEOTIDE SEQUENCE [LARGE SCALE GENOMIC DNA]</scope>
    <source>
        <strain>ATCC BAA-1088 / PV-4</strain>
    </source>
</reference>
<feature type="chain" id="PRO_1000054539" description="Large ribosomal subunit protein uL15">
    <location>
        <begin position="1"/>
        <end position="144"/>
    </location>
</feature>
<feature type="region of interest" description="Disordered" evidence="2">
    <location>
        <begin position="1"/>
        <end position="49"/>
    </location>
</feature>
<feature type="compositionally biased region" description="Gly residues" evidence="2">
    <location>
        <begin position="21"/>
        <end position="31"/>
    </location>
</feature>
<evidence type="ECO:0000255" key="1">
    <source>
        <dbReference type="HAMAP-Rule" id="MF_01341"/>
    </source>
</evidence>
<evidence type="ECO:0000256" key="2">
    <source>
        <dbReference type="SAM" id="MobiDB-lite"/>
    </source>
</evidence>
<evidence type="ECO:0000305" key="3"/>
<name>RL15_SHELP</name>
<comment type="function">
    <text evidence="1">Binds to the 23S rRNA.</text>
</comment>
<comment type="subunit">
    <text evidence="1">Part of the 50S ribosomal subunit.</text>
</comment>
<comment type="similarity">
    <text evidence="1">Belongs to the universal ribosomal protein uL15 family.</text>
</comment>
<proteinExistence type="inferred from homology"/>
<protein>
    <recommendedName>
        <fullName evidence="1">Large ribosomal subunit protein uL15</fullName>
    </recommendedName>
    <alternativeName>
        <fullName evidence="3">50S ribosomal protein L15</fullName>
    </alternativeName>
</protein>
<accession>A3Q9A1</accession>
<sequence length="144" mass="14892">MKLNTLSPAAGAKSAAKRVGRGIGSGLGKTAGRGHKGQKSRSGGGVRVGFEGGQMPLKIRLPKFGFTSRKAMVTAEIRVSELAKVNGDVVDLNALKDANLVTRNIQFAKVVLSGTIERPVTVKGLKVTKGARAAIEAAGGKIEE</sequence>